<evidence type="ECO:0000255" key="1">
    <source>
        <dbReference type="HAMAP-Rule" id="MF_00367"/>
    </source>
</evidence>
<evidence type="ECO:0000255" key="2">
    <source>
        <dbReference type="PROSITE-ProRule" id="PRU01050"/>
    </source>
</evidence>
<evidence type="ECO:0000305" key="3"/>
<gene>
    <name evidence="1" type="primary">era</name>
    <name type="synonym">bex</name>
    <name type="ordered locus">Cgl2285</name>
    <name type="ordered locus">cg2510</name>
</gene>
<organism>
    <name type="scientific">Corynebacterium glutamicum (strain ATCC 13032 / DSM 20300 / JCM 1318 / BCRC 11384 / CCUG 27702 / LMG 3730 / NBRC 12168 / NCIMB 10025 / NRRL B-2784 / 534)</name>
    <dbReference type="NCBI Taxonomy" id="196627"/>
    <lineage>
        <taxon>Bacteria</taxon>
        <taxon>Bacillati</taxon>
        <taxon>Actinomycetota</taxon>
        <taxon>Actinomycetes</taxon>
        <taxon>Mycobacteriales</taxon>
        <taxon>Corynebacteriaceae</taxon>
        <taxon>Corynebacterium</taxon>
    </lineage>
</organism>
<dbReference type="EMBL" id="BA000036">
    <property type="protein sequence ID" value="BAB99678.1"/>
    <property type="molecule type" value="Genomic_DNA"/>
</dbReference>
<dbReference type="EMBL" id="BX927154">
    <property type="protein sequence ID" value="CAF20627.1"/>
    <property type="status" value="ALT_INIT"/>
    <property type="molecule type" value="Genomic_DNA"/>
</dbReference>
<dbReference type="RefSeq" id="NP_601485.1">
    <property type="nucleotide sequence ID" value="NC_003450.3"/>
</dbReference>
<dbReference type="RefSeq" id="WP_011015011.1">
    <property type="nucleotide sequence ID" value="NC_006958.1"/>
</dbReference>
<dbReference type="SMR" id="Q8NNB9"/>
<dbReference type="STRING" id="196627.cg2510"/>
<dbReference type="GeneID" id="1020238"/>
<dbReference type="KEGG" id="cgb:cg2510"/>
<dbReference type="KEGG" id="cgl:Cgl2285"/>
<dbReference type="PATRIC" id="fig|196627.13.peg.2219"/>
<dbReference type="eggNOG" id="COG1159">
    <property type="taxonomic scope" value="Bacteria"/>
</dbReference>
<dbReference type="HOGENOM" id="CLU_038009_0_2_11"/>
<dbReference type="OrthoDB" id="9805918at2"/>
<dbReference type="BioCyc" id="CORYNE:G18NG-11882-MONOMER"/>
<dbReference type="Proteomes" id="UP000000582">
    <property type="component" value="Chromosome"/>
</dbReference>
<dbReference type="Proteomes" id="UP000001009">
    <property type="component" value="Chromosome"/>
</dbReference>
<dbReference type="GO" id="GO:0005829">
    <property type="term" value="C:cytosol"/>
    <property type="evidence" value="ECO:0007669"/>
    <property type="project" value="TreeGrafter"/>
</dbReference>
<dbReference type="GO" id="GO:0005886">
    <property type="term" value="C:plasma membrane"/>
    <property type="evidence" value="ECO:0007669"/>
    <property type="project" value="UniProtKB-SubCell"/>
</dbReference>
<dbReference type="GO" id="GO:0005525">
    <property type="term" value="F:GTP binding"/>
    <property type="evidence" value="ECO:0007669"/>
    <property type="project" value="UniProtKB-UniRule"/>
</dbReference>
<dbReference type="GO" id="GO:0003924">
    <property type="term" value="F:GTPase activity"/>
    <property type="evidence" value="ECO:0007669"/>
    <property type="project" value="UniProtKB-UniRule"/>
</dbReference>
<dbReference type="GO" id="GO:0043024">
    <property type="term" value="F:ribosomal small subunit binding"/>
    <property type="evidence" value="ECO:0007669"/>
    <property type="project" value="TreeGrafter"/>
</dbReference>
<dbReference type="GO" id="GO:0070181">
    <property type="term" value="F:small ribosomal subunit rRNA binding"/>
    <property type="evidence" value="ECO:0007669"/>
    <property type="project" value="UniProtKB-UniRule"/>
</dbReference>
<dbReference type="GO" id="GO:0000028">
    <property type="term" value="P:ribosomal small subunit assembly"/>
    <property type="evidence" value="ECO:0007669"/>
    <property type="project" value="TreeGrafter"/>
</dbReference>
<dbReference type="CDD" id="cd04163">
    <property type="entry name" value="Era"/>
    <property type="match status" value="1"/>
</dbReference>
<dbReference type="CDD" id="cd22534">
    <property type="entry name" value="KH-II_Era"/>
    <property type="match status" value="1"/>
</dbReference>
<dbReference type="Gene3D" id="3.30.300.20">
    <property type="match status" value="1"/>
</dbReference>
<dbReference type="Gene3D" id="3.40.50.300">
    <property type="entry name" value="P-loop containing nucleotide triphosphate hydrolases"/>
    <property type="match status" value="1"/>
</dbReference>
<dbReference type="HAMAP" id="MF_00367">
    <property type="entry name" value="GTPase_Era"/>
    <property type="match status" value="1"/>
</dbReference>
<dbReference type="InterPro" id="IPR030388">
    <property type="entry name" value="G_ERA_dom"/>
</dbReference>
<dbReference type="InterPro" id="IPR006073">
    <property type="entry name" value="GTP-bd"/>
</dbReference>
<dbReference type="InterPro" id="IPR005662">
    <property type="entry name" value="GTPase_Era-like"/>
</dbReference>
<dbReference type="InterPro" id="IPR015946">
    <property type="entry name" value="KH_dom-like_a/b"/>
</dbReference>
<dbReference type="InterPro" id="IPR004044">
    <property type="entry name" value="KH_dom_type_2"/>
</dbReference>
<dbReference type="InterPro" id="IPR009019">
    <property type="entry name" value="KH_sf_prok-type"/>
</dbReference>
<dbReference type="InterPro" id="IPR027417">
    <property type="entry name" value="P-loop_NTPase"/>
</dbReference>
<dbReference type="InterPro" id="IPR005225">
    <property type="entry name" value="Small_GTP-bd"/>
</dbReference>
<dbReference type="NCBIfam" id="TIGR00436">
    <property type="entry name" value="era"/>
    <property type="match status" value="1"/>
</dbReference>
<dbReference type="NCBIfam" id="NF000908">
    <property type="entry name" value="PRK00089.1"/>
    <property type="match status" value="1"/>
</dbReference>
<dbReference type="NCBIfam" id="TIGR00231">
    <property type="entry name" value="small_GTP"/>
    <property type="match status" value="1"/>
</dbReference>
<dbReference type="PANTHER" id="PTHR42698">
    <property type="entry name" value="GTPASE ERA"/>
    <property type="match status" value="1"/>
</dbReference>
<dbReference type="PANTHER" id="PTHR42698:SF1">
    <property type="entry name" value="GTPASE ERA, MITOCHONDRIAL"/>
    <property type="match status" value="1"/>
</dbReference>
<dbReference type="Pfam" id="PF07650">
    <property type="entry name" value="KH_2"/>
    <property type="match status" value="1"/>
</dbReference>
<dbReference type="Pfam" id="PF01926">
    <property type="entry name" value="MMR_HSR1"/>
    <property type="match status" value="1"/>
</dbReference>
<dbReference type="PRINTS" id="PR00326">
    <property type="entry name" value="GTP1OBG"/>
</dbReference>
<dbReference type="SUPFAM" id="SSF52540">
    <property type="entry name" value="P-loop containing nucleoside triphosphate hydrolases"/>
    <property type="match status" value="1"/>
</dbReference>
<dbReference type="SUPFAM" id="SSF54814">
    <property type="entry name" value="Prokaryotic type KH domain (KH-domain type II)"/>
    <property type="match status" value="1"/>
</dbReference>
<dbReference type="PROSITE" id="PS51713">
    <property type="entry name" value="G_ERA"/>
    <property type="match status" value="1"/>
</dbReference>
<comment type="function">
    <text evidence="1">An essential GTPase that binds both GDP and GTP, with rapid nucleotide exchange. Plays a role in 16S rRNA processing and 30S ribosomal subunit biogenesis and possibly also in cell cycle regulation and energy metabolism.</text>
</comment>
<comment type="subunit">
    <text evidence="1">Monomer.</text>
</comment>
<comment type="subcellular location">
    <subcellularLocation>
        <location>Cytoplasm</location>
    </subcellularLocation>
    <subcellularLocation>
        <location evidence="1">Cell membrane</location>
        <topology evidence="1">Peripheral membrane protein</topology>
    </subcellularLocation>
</comment>
<comment type="similarity">
    <text evidence="1 2">Belongs to the TRAFAC class TrmE-Era-EngA-EngB-Septin-like GTPase superfamily. Era GTPase family.</text>
</comment>
<comment type="sequence caution" evidence="3">
    <conflict type="erroneous initiation">
        <sequence resource="EMBL-CDS" id="CAF20627"/>
    </conflict>
    <text>Extended N-terminus.</text>
</comment>
<proteinExistence type="inferred from homology"/>
<reference key="1">
    <citation type="journal article" date="2003" name="Appl. Microbiol. Biotechnol.">
        <title>The Corynebacterium glutamicum genome: features and impacts on biotechnological processes.</title>
        <authorList>
            <person name="Ikeda M."/>
            <person name="Nakagawa S."/>
        </authorList>
    </citation>
    <scope>NUCLEOTIDE SEQUENCE [LARGE SCALE GENOMIC DNA]</scope>
    <source>
        <strain>ATCC 13032 / DSM 20300 / JCM 1318 / BCRC 11384 / CCUG 27702 / LMG 3730 / NBRC 12168 / NCIMB 10025 / NRRL B-2784 / 534</strain>
    </source>
</reference>
<reference key="2">
    <citation type="journal article" date="2003" name="J. Biotechnol.">
        <title>The complete Corynebacterium glutamicum ATCC 13032 genome sequence and its impact on the production of L-aspartate-derived amino acids and vitamins.</title>
        <authorList>
            <person name="Kalinowski J."/>
            <person name="Bathe B."/>
            <person name="Bartels D."/>
            <person name="Bischoff N."/>
            <person name="Bott M."/>
            <person name="Burkovski A."/>
            <person name="Dusch N."/>
            <person name="Eggeling L."/>
            <person name="Eikmanns B.J."/>
            <person name="Gaigalat L."/>
            <person name="Goesmann A."/>
            <person name="Hartmann M."/>
            <person name="Huthmacher K."/>
            <person name="Kraemer R."/>
            <person name="Linke B."/>
            <person name="McHardy A.C."/>
            <person name="Meyer F."/>
            <person name="Moeckel B."/>
            <person name="Pfefferle W."/>
            <person name="Puehler A."/>
            <person name="Rey D.A."/>
            <person name="Rueckert C."/>
            <person name="Rupp O."/>
            <person name="Sahm H."/>
            <person name="Wendisch V.F."/>
            <person name="Wiegraebe I."/>
            <person name="Tauch A."/>
        </authorList>
    </citation>
    <scope>NUCLEOTIDE SEQUENCE [LARGE SCALE GENOMIC DNA]</scope>
    <source>
        <strain>ATCC 13032 / DSM 20300 / JCM 1318 / BCRC 11384 / CCUG 27702 / LMG 3730 / NBRC 12168 / NCIMB 10025 / NRRL B-2784 / 534</strain>
    </source>
</reference>
<sequence length="305" mass="33419">MSFTDTPDGFRSGFVSFVGRPNTGKSTLTNALVGEKIAITANQPETTRHPIRGLVHRDNAQIIVVDTPGLHRPRTLLGERLNEAVKDTYADVDLIGFTVPANEKIGPGDRWILEAVRKVSPKTPILGIITKADSVSRDLVAAQLMAVHELLGGNSEVVPVSSTSGENVETLIKVMTDLLPEGPKFYPDDHITDEDTNTRIAEAIREAALSGLKNELPHSVAVEVDEILPDPERNGVLAVHAIIYVERVGQKDIIVGHKGQRLGRIIHTSRQDIIKILGQNVFLDLRIKVLKNWQSDPKALNRLGF</sequence>
<keyword id="KW-1003">Cell membrane</keyword>
<keyword id="KW-0963">Cytoplasm</keyword>
<keyword id="KW-0342">GTP-binding</keyword>
<keyword id="KW-0472">Membrane</keyword>
<keyword id="KW-0547">Nucleotide-binding</keyword>
<keyword id="KW-1185">Reference proteome</keyword>
<keyword id="KW-0690">Ribosome biogenesis</keyword>
<keyword id="KW-0694">RNA-binding</keyword>
<keyword id="KW-0699">rRNA-binding</keyword>
<name>ERA_CORGL</name>
<accession>Q8NNB9</accession>
<feature type="chain" id="PRO_0000180009" description="GTPase Era">
    <location>
        <begin position="1"/>
        <end position="305"/>
    </location>
</feature>
<feature type="domain" description="Era-type G" evidence="2">
    <location>
        <begin position="11"/>
        <end position="181"/>
    </location>
</feature>
<feature type="domain" description="KH type-2" evidence="1">
    <location>
        <begin position="212"/>
        <end position="291"/>
    </location>
</feature>
<feature type="region of interest" description="G1" evidence="2">
    <location>
        <begin position="19"/>
        <end position="26"/>
    </location>
</feature>
<feature type="region of interest" description="G2" evidence="2">
    <location>
        <begin position="45"/>
        <end position="49"/>
    </location>
</feature>
<feature type="region of interest" description="G3" evidence="2">
    <location>
        <begin position="66"/>
        <end position="69"/>
    </location>
</feature>
<feature type="region of interest" description="G4" evidence="2">
    <location>
        <begin position="130"/>
        <end position="133"/>
    </location>
</feature>
<feature type="region of interest" description="G5" evidence="2">
    <location>
        <begin position="160"/>
        <end position="162"/>
    </location>
</feature>
<feature type="binding site" evidence="1">
    <location>
        <begin position="19"/>
        <end position="26"/>
    </location>
    <ligand>
        <name>GTP</name>
        <dbReference type="ChEBI" id="CHEBI:37565"/>
    </ligand>
</feature>
<feature type="binding site" evidence="1">
    <location>
        <begin position="66"/>
        <end position="70"/>
    </location>
    <ligand>
        <name>GTP</name>
        <dbReference type="ChEBI" id="CHEBI:37565"/>
    </ligand>
</feature>
<feature type="binding site" evidence="1">
    <location>
        <begin position="130"/>
        <end position="133"/>
    </location>
    <ligand>
        <name>GTP</name>
        <dbReference type="ChEBI" id="CHEBI:37565"/>
    </ligand>
</feature>
<protein>
    <recommendedName>
        <fullName evidence="1">GTPase Era</fullName>
    </recommendedName>
</protein>